<protein>
    <recommendedName>
        <fullName evidence="1">3-phosphoshikimate 1-carboxyvinyltransferase</fullName>
        <ecNumber evidence="1">2.5.1.19</ecNumber>
    </recommendedName>
    <alternativeName>
        <fullName evidence="1">5-enolpyruvylshikimate-3-phosphate synthase</fullName>
        <shortName evidence="1">EPSP synthase</shortName>
        <shortName evidence="1">EPSPS</shortName>
    </alternativeName>
</protein>
<comment type="function">
    <text evidence="1">Catalyzes the transfer of the enolpyruvyl moiety of phosphoenolpyruvate (PEP) to the 5-hydroxyl of shikimate-3-phosphate (S3P) to produce enolpyruvyl shikimate-3-phosphate and inorganic phosphate.</text>
</comment>
<comment type="catalytic activity">
    <reaction evidence="1">
        <text>3-phosphoshikimate + phosphoenolpyruvate = 5-O-(1-carboxyvinyl)-3-phosphoshikimate + phosphate</text>
        <dbReference type="Rhea" id="RHEA:21256"/>
        <dbReference type="ChEBI" id="CHEBI:43474"/>
        <dbReference type="ChEBI" id="CHEBI:57701"/>
        <dbReference type="ChEBI" id="CHEBI:58702"/>
        <dbReference type="ChEBI" id="CHEBI:145989"/>
        <dbReference type="EC" id="2.5.1.19"/>
    </reaction>
    <physiologicalReaction direction="left-to-right" evidence="1">
        <dbReference type="Rhea" id="RHEA:21257"/>
    </physiologicalReaction>
</comment>
<comment type="pathway">
    <text evidence="1">Metabolic intermediate biosynthesis; chorismate biosynthesis; chorismate from D-erythrose 4-phosphate and phosphoenolpyruvate: step 6/7.</text>
</comment>
<comment type="subunit">
    <text evidence="1">Monomer.</text>
</comment>
<comment type="subcellular location">
    <subcellularLocation>
        <location evidence="1">Cytoplasm</location>
    </subcellularLocation>
</comment>
<comment type="similarity">
    <text evidence="1">Belongs to the EPSP synthase family.</text>
</comment>
<gene>
    <name evidence="1" type="primary">aroA</name>
    <name type="ordered locus">CC_3589</name>
</gene>
<accession>Q9A2H2</accession>
<sequence length="443" mass="46075">MSLAGLKSAPGGALRGIVRAPGDKSISHRSMILGALATGTTTVEGLLEGDDVLATARAMQAFGARIEREGVGRWRIEGKGGFEEPVDVIDCGNAGTGVRLIMGAAAGFAMCATFTGDQSLRGRPMGRVLDPLARMGATWLGRDKGRLPLTLKGGNLRGLNYTLPMASAQVKSAVLLAGLHAEGGVEVIEPEATRDHTERMLRAFGAEVIVEDRKAGDKTFRHVRLPEGQKLTGTHVAVPGDPSSAAFPLVAALIVPGSEVTVEGVMLNELRTGLFTTLQEMGADLVISNVRVASGEEVGDITARYSQLKGVVVPPERAPSMIDEYPILAVAAAFASGETVMRGVGEMRVKESDRISLTANGLKACGVQVVEEPEGFIVTGTGQPPKGGATVVTHGDHRIAMSHLILGMAAQAEVAVDEPGMIATSFPGFADLMRGLGATLAEA</sequence>
<feature type="chain" id="PRO_0000088241" description="3-phosphoshikimate 1-carboxyvinyltransferase">
    <location>
        <begin position="1"/>
        <end position="443"/>
    </location>
</feature>
<feature type="active site" description="Proton acceptor" evidence="1">
    <location>
        <position position="323"/>
    </location>
</feature>
<feature type="binding site" evidence="1">
    <location>
        <position position="24"/>
    </location>
    <ligand>
        <name>3-phosphoshikimate</name>
        <dbReference type="ChEBI" id="CHEBI:145989"/>
    </ligand>
</feature>
<feature type="binding site" evidence="1">
    <location>
        <position position="24"/>
    </location>
    <ligand>
        <name>phosphoenolpyruvate</name>
        <dbReference type="ChEBI" id="CHEBI:58702"/>
    </ligand>
</feature>
<feature type="binding site" evidence="1">
    <location>
        <position position="25"/>
    </location>
    <ligand>
        <name>3-phosphoshikimate</name>
        <dbReference type="ChEBI" id="CHEBI:145989"/>
    </ligand>
</feature>
<feature type="binding site" evidence="1">
    <location>
        <position position="29"/>
    </location>
    <ligand>
        <name>3-phosphoshikimate</name>
        <dbReference type="ChEBI" id="CHEBI:145989"/>
    </ligand>
</feature>
<feature type="binding site" evidence="1">
    <location>
        <position position="95"/>
    </location>
    <ligand>
        <name>phosphoenolpyruvate</name>
        <dbReference type="ChEBI" id="CHEBI:58702"/>
    </ligand>
</feature>
<feature type="binding site" evidence="1">
    <location>
        <position position="123"/>
    </location>
    <ligand>
        <name>phosphoenolpyruvate</name>
        <dbReference type="ChEBI" id="CHEBI:58702"/>
    </ligand>
</feature>
<feature type="binding site" evidence="1">
    <location>
        <position position="167"/>
    </location>
    <ligand>
        <name>3-phosphoshikimate</name>
        <dbReference type="ChEBI" id="CHEBI:145989"/>
    </ligand>
</feature>
<feature type="binding site" evidence="1">
    <location>
        <position position="169"/>
    </location>
    <ligand>
        <name>3-phosphoshikimate</name>
        <dbReference type="ChEBI" id="CHEBI:145989"/>
    </ligand>
</feature>
<feature type="binding site" evidence="1">
    <location>
        <position position="169"/>
    </location>
    <ligand>
        <name>phosphoenolpyruvate</name>
        <dbReference type="ChEBI" id="CHEBI:58702"/>
    </ligand>
</feature>
<feature type="binding site" evidence="1">
    <location>
        <position position="323"/>
    </location>
    <ligand>
        <name>3-phosphoshikimate</name>
        <dbReference type="ChEBI" id="CHEBI:145989"/>
    </ligand>
</feature>
<feature type="binding site" evidence="1">
    <location>
        <position position="350"/>
    </location>
    <ligand>
        <name>3-phosphoshikimate</name>
        <dbReference type="ChEBI" id="CHEBI:145989"/>
    </ligand>
</feature>
<feature type="binding site" evidence="1">
    <location>
        <position position="354"/>
    </location>
    <ligand>
        <name>phosphoenolpyruvate</name>
        <dbReference type="ChEBI" id="CHEBI:58702"/>
    </ligand>
</feature>
<feature type="binding site" evidence="1">
    <location>
        <position position="398"/>
    </location>
    <ligand>
        <name>phosphoenolpyruvate</name>
        <dbReference type="ChEBI" id="CHEBI:58702"/>
    </ligand>
</feature>
<dbReference type="EC" id="2.5.1.19" evidence="1"/>
<dbReference type="EMBL" id="AE005673">
    <property type="protein sequence ID" value="AAK25551.1"/>
    <property type="molecule type" value="Genomic_DNA"/>
</dbReference>
<dbReference type="PIR" id="C87694">
    <property type="entry name" value="C87694"/>
</dbReference>
<dbReference type="RefSeq" id="NP_422383.1">
    <property type="nucleotide sequence ID" value="NC_002696.2"/>
</dbReference>
<dbReference type="RefSeq" id="WP_010921418.1">
    <property type="nucleotide sequence ID" value="NC_002696.2"/>
</dbReference>
<dbReference type="SMR" id="Q9A2H2"/>
<dbReference type="STRING" id="190650.CC_3589"/>
<dbReference type="EnsemblBacteria" id="AAK25551">
    <property type="protein sequence ID" value="AAK25551"/>
    <property type="gene ID" value="CC_3589"/>
</dbReference>
<dbReference type="KEGG" id="ccr:CC_3589"/>
<dbReference type="PATRIC" id="fig|190650.5.peg.3593"/>
<dbReference type="eggNOG" id="COG0128">
    <property type="taxonomic scope" value="Bacteria"/>
</dbReference>
<dbReference type="HOGENOM" id="CLU_024321_0_1_5"/>
<dbReference type="BioCyc" id="CAULO:CC3589-MONOMER"/>
<dbReference type="UniPathway" id="UPA00053">
    <property type="reaction ID" value="UER00089"/>
</dbReference>
<dbReference type="Proteomes" id="UP000001816">
    <property type="component" value="Chromosome"/>
</dbReference>
<dbReference type="GO" id="GO:0005737">
    <property type="term" value="C:cytoplasm"/>
    <property type="evidence" value="ECO:0007669"/>
    <property type="project" value="UniProtKB-SubCell"/>
</dbReference>
<dbReference type="GO" id="GO:0003866">
    <property type="term" value="F:3-phosphoshikimate 1-carboxyvinyltransferase activity"/>
    <property type="evidence" value="ECO:0007669"/>
    <property type="project" value="UniProtKB-UniRule"/>
</dbReference>
<dbReference type="GO" id="GO:0008652">
    <property type="term" value="P:amino acid biosynthetic process"/>
    <property type="evidence" value="ECO:0007669"/>
    <property type="project" value="UniProtKB-KW"/>
</dbReference>
<dbReference type="GO" id="GO:0009073">
    <property type="term" value="P:aromatic amino acid family biosynthetic process"/>
    <property type="evidence" value="ECO:0007669"/>
    <property type="project" value="UniProtKB-KW"/>
</dbReference>
<dbReference type="GO" id="GO:0009423">
    <property type="term" value="P:chorismate biosynthetic process"/>
    <property type="evidence" value="ECO:0007669"/>
    <property type="project" value="UniProtKB-UniRule"/>
</dbReference>
<dbReference type="CDD" id="cd01556">
    <property type="entry name" value="EPSP_synthase"/>
    <property type="match status" value="1"/>
</dbReference>
<dbReference type="FunFam" id="3.65.10.10:FF:000005">
    <property type="entry name" value="3-phosphoshikimate 1-carboxyvinyltransferase"/>
    <property type="match status" value="1"/>
</dbReference>
<dbReference type="Gene3D" id="3.65.10.10">
    <property type="entry name" value="Enolpyruvate transferase domain"/>
    <property type="match status" value="2"/>
</dbReference>
<dbReference type="HAMAP" id="MF_00210">
    <property type="entry name" value="EPSP_synth"/>
    <property type="match status" value="1"/>
</dbReference>
<dbReference type="InterPro" id="IPR001986">
    <property type="entry name" value="Enolpyruvate_Tfrase_dom"/>
</dbReference>
<dbReference type="InterPro" id="IPR036968">
    <property type="entry name" value="Enolpyruvate_Tfrase_sf"/>
</dbReference>
<dbReference type="InterPro" id="IPR006264">
    <property type="entry name" value="EPSP_synthase"/>
</dbReference>
<dbReference type="InterPro" id="IPR023193">
    <property type="entry name" value="EPSP_synthase_CS"/>
</dbReference>
<dbReference type="InterPro" id="IPR013792">
    <property type="entry name" value="RNA3'P_cycl/enolpyr_Trfase_a/b"/>
</dbReference>
<dbReference type="NCBIfam" id="TIGR01356">
    <property type="entry name" value="aroA"/>
    <property type="match status" value="1"/>
</dbReference>
<dbReference type="PANTHER" id="PTHR21090">
    <property type="entry name" value="AROM/DEHYDROQUINATE SYNTHASE"/>
    <property type="match status" value="1"/>
</dbReference>
<dbReference type="PANTHER" id="PTHR21090:SF5">
    <property type="entry name" value="PENTAFUNCTIONAL AROM POLYPEPTIDE"/>
    <property type="match status" value="1"/>
</dbReference>
<dbReference type="Pfam" id="PF00275">
    <property type="entry name" value="EPSP_synthase"/>
    <property type="match status" value="1"/>
</dbReference>
<dbReference type="PIRSF" id="PIRSF000505">
    <property type="entry name" value="EPSPS"/>
    <property type="match status" value="1"/>
</dbReference>
<dbReference type="SUPFAM" id="SSF55205">
    <property type="entry name" value="EPT/RTPC-like"/>
    <property type="match status" value="1"/>
</dbReference>
<dbReference type="PROSITE" id="PS00104">
    <property type="entry name" value="EPSP_SYNTHASE_1"/>
    <property type="match status" value="1"/>
</dbReference>
<dbReference type="PROSITE" id="PS00885">
    <property type="entry name" value="EPSP_SYNTHASE_2"/>
    <property type="match status" value="1"/>
</dbReference>
<proteinExistence type="inferred from homology"/>
<keyword id="KW-0028">Amino-acid biosynthesis</keyword>
<keyword id="KW-0057">Aromatic amino acid biosynthesis</keyword>
<keyword id="KW-0963">Cytoplasm</keyword>
<keyword id="KW-1185">Reference proteome</keyword>
<keyword id="KW-0808">Transferase</keyword>
<name>AROA_CAUVC</name>
<organism>
    <name type="scientific">Caulobacter vibrioides (strain ATCC 19089 / CIP 103742 / CB 15)</name>
    <name type="common">Caulobacter crescentus</name>
    <dbReference type="NCBI Taxonomy" id="190650"/>
    <lineage>
        <taxon>Bacteria</taxon>
        <taxon>Pseudomonadati</taxon>
        <taxon>Pseudomonadota</taxon>
        <taxon>Alphaproteobacteria</taxon>
        <taxon>Caulobacterales</taxon>
        <taxon>Caulobacteraceae</taxon>
        <taxon>Caulobacter</taxon>
    </lineage>
</organism>
<evidence type="ECO:0000255" key="1">
    <source>
        <dbReference type="HAMAP-Rule" id="MF_00210"/>
    </source>
</evidence>
<reference key="1">
    <citation type="journal article" date="2001" name="Proc. Natl. Acad. Sci. U.S.A.">
        <title>Complete genome sequence of Caulobacter crescentus.</title>
        <authorList>
            <person name="Nierman W.C."/>
            <person name="Feldblyum T.V."/>
            <person name="Laub M.T."/>
            <person name="Paulsen I.T."/>
            <person name="Nelson K.E."/>
            <person name="Eisen J.A."/>
            <person name="Heidelberg J.F."/>
            <person name="Alley M.R.K."/>
            <person name="Ohta N."/>
            <person name="Maddock J.R."/>
            <person name="Potocka I."/>
            <person name="Nelson W.C."/>
            <person name="Newton A."/>
            <person name="Stephens C."/>
            <person name="Phadke N.D."/>
            <person name="Ely B."/>
            <person name="DeBoy R.T."/>
            <person name="Dodson R.J."/>
            <person name="Durkin A.S."/>
            <person name="Gwinn M.L."/>
            <person name="Haft D.H."/>
            <person name="Kolonay J.F."/>
            <person name="Smit J."/>
            <person name="Craven M.B."/>
            <person name="Khouri H.M."/>
            <person name="Shetty J."/>
            <person name="Berry K.J."/>
            <person name="Utterback T.R."/>
            <person name="Tran K."/>
            <person name="Wolf A.M."/>
            <person name="Vamathevan J.J."/>
            <person name="Ermolaeva M.D."/>
            <person name="White O."/>
            <person name="Salzberg S.L."/>
            <person name="Venter J.C."/>
            <person name="Shapiro L."/>
            <person name="Fraser C.M."/>
        </authorList>
    </citation>
    <scope>NUCLEOTIDE SEQUENCE [LARGE SCALE GENOMIC DNA]</scope>
    <source>
        <strain>ATCC 19089 / CIP 103742 / CB 15</strain>
    </source>
</reference>